<comment type="function">
    <text evidence="2 11 17">Mediates transcriptional repression by certain nuclear receptors (PubMed:20812024). Part of a complex which promotes histone deacetylation and the formation of repressive chromatin structures which may impede the access of basal transcription factors. Participates in the transcriptional repressor activity produced by BCL6. Recruited by ZBTB7A to the androgen response elements/ARE on target genes, negatively regulates androgen receptor signaling and androgen-induced cell proliferation (PubMed:20812024). Mediates the NR1D1-dependent repression and circadian regulation of TSHB expression (By similarity). The NCOR1-HDAC3 complex regulates the circadian expression of the core clock gene ARTNL/BMAL1 and the genes involved in lipid metabolism in the liver (By similarity).</text>
</comment>
<comment type="subunit">
    <text evidence="2 7 8 9 10 11 12 13 14 15 16 17 18 19 20 21">Forms a large corepressor complex that contains SIN3A/B and histone deacetylases HDAC1 and HDAC2. This complex associates with the thyroid receptor (TR) and the retinoid acid receptor (RAR) in the absence of ligand. Interacts directly with RARA; the interaction is facilitated with RARA trimethylation. Component of the N-Cor repressor complex, at least composed of CBFA2T3, HEXIM1, NCOR1, NCOR2, HDAC3, TBL1X, TBL1XR1, CORO2A and GPS2. Interacts with ZBTB33; the interaction serves to recruit the N-CoR complex to promoter regions containing methylated CpG dinucleotides. Interacts with TRIM28 and KDM3A. Interacts (via the RD1 domain) with BAZ1A (via its N-terminal); the interaction corepresses a number of NCOR1-regulated genes. Interacts with BCL6, C1D, DACH1, HEXIM1, HDAC7, RORA, RORC, SAP30, SIAH2, SIN3A and SIN3B. May interact with DEAF1. Interacts with RXRA. Interacts with SETD5 (By similarity). Interacts with VDR (PubMed:28698609). Interacts with ZBTB7A (PubMed:20812024). Interacts with AR (PubMed:20812024). Interacts with HDAC3 (By similarity).</text>
</comment>
<comment type="interaction">
    <interactant intactId="EBI-347233">
        <id>O75376</id>
    </interactant>
    <interactant intactId="EBI-347111">
        <id>Q9UI36</id>
        <label>DACH1</label>
    </interactant>
    <organismsDiffer>false</organismsDiffer>
    <experiments>2</experiments>
</comment>
<comment type="interaction">
    <interactant intactId="EBI-347233">
        <id>O75376</id>
    </interactant>
    <interactant intactId="EBI-607682">
        <id>O15379</id>
        <label>HDAC3</label>
    </interactant>
    <organismsDiffer>false</organismsDiffer>
    <experiments>6</experiments>
</comment>
<comment type="interaction">
    <interactant intactId="EBI-347233">
        <id>O75376</id>
    </interactant>
    <interactant intactId="EBI-746704">
        <id>Q9UJC3</id>
        <label>HOOK1</label>
    </interactant>
    <organismsDiffer>false</organismsDiffer>
    <experiments>3</experiments>
</comment>
<comment type="interaction">
    <interactant intactId="EBI-347233">
        <id>O75376</id>
    </interactant>
    <interactant intactId="EBI-466029">
        <id>P42858</id>
        <label>HTT</label>
    </interactant>
    <organismsDiffer>false</organismsDiffer>
    <experiments>3</experiments>
</comment>
<comment type="interaction">
    <interactant intactId="EBI-347233">
        <id>O75376</id>
    </interactant>
    <interactant intactId="EBI-10178578">
        <id>I6L9F6</id>
        <label>NEFL</label>
    </interactant>
    <organismsDiffer>false</organismsDiffer>
    <experiments>3</experiments>
</comment>
<comment type="interaction">
    <interactant intactId="EBI-347233">
        <id>O75376</id>
    </interactant>
    <interactant intactId="EBI-2811738">
        <id>P20393</id>
        <label>NR1D1</label>
    </interactant>
    <organismsDiffer>false</organismsDiffer>
    <experiments>3</experiments>
</comment>
<comment type="interaction">
    <interactant intactId="EBI-347233">
        <id>O75376</id>
    </interactant>
    <interactant intactId="EBI-745354">
        <id>P55055</id>
        <label>NR1H2</label>
    </interactant>
    <organismsDiffer>false</organismsDiffer>
    <experiments>6</experiments>
</comment>
<comment type="interaction">
    <interactant intactId="EBI-347233">
        <id>O75376</id>
    </interactant>
    <interactant intactId="EBI-781356">
        <id>Q13133</id>
        <label>NR1H3</label>
    </interactant>
    <organismsDiffer>false</organismsDiffer>
    <experiments>3</experiments>
</comment>
<comment type="interaction">
    <interactant intactId="EBI-347233">
        <id>O75376</id>
    </interactant>
    <interactant intactId="EBI-78615">
        <id>Q07869</id>
        <label>PPARA</label>
    </interactant>
    <organismsDiffer>false</organismsDiffer>
    <experiments>3</experiments>
</comment>
<comment type="interaction">
    <interactant intactId="EBI-347233">
        <id>O75376</id>
    </interactant>
    <interactant intactId="EBI-781384">
        <id>P37231</id>
        <label>PPARG</label>
    </interactant>
    <organismsDiffer>false</organismsDiffer>
    <experiments>2</experiments>
</comment>
<comment type="interaction">
    <interactant intactId="EBI-347233">
        <id>O75376</id>
    </interactant>
    <interactant intactId="EBI-437708">
        <id>P62937</id>
        <label>PPIA</label>
    </interactant>
    <organismsDiffer>false</organismsDiffer>
    <experiments>3</experiments>
</comment>
<comment type="interaction">
    <interactant intactId="EBI-347233">
        <id>O75376</id>
    </interactant>
    <interactant intactId="EBI-413374">
        <id>P10276</id>
        <label>RARA</label>
    </interactant>
    <organismsDiffer>false</organismsDiffer>
    <experiments>6</experiments>
</comment>
<comment type="interaction">
    <interactant intactId="EBI-347233">
        <id>O75376</id>
    </interactant>
    <interactant intactId="EBI-743342">
        <id>Q06455</id>
        <label>RUNX1T1</label>
    </interactant>
    <organismsDiffer>false</organismsDiffer>
    <experiments>5</experiments>
</comment>
<comment type="interaction">
    <interactant intactId="EBI-347233">
        <id>O75376</id>
    </interactant>
    <interactant intactId="EBI-373345">
        <id>Q99719</id>
        <label>SEPTIN5</label>
    </interactant>
    <organismsDiffer>false</organismsDiffer>
    <experiments>3</experiments>
</comment>
<comment type="interaction">
    <interactant intactId="EBI-347233">
        <id>O75376</id>
    </interactant>
    <interactant intactId="EBI-11522811">
        <id>Q8IUQ4-2</id>
        <label>SIAH1</label>
    </interactant>
    <organismsDiffer>false</organismsDiffer>
    <experiments>3</experiments>
</comment>
<comment type="interaction">
    <interactant intactId="EBI-347233">
        <id>O75376</id>
    </interactant>
    <interactant intactId="EBI-347281">
        <id>P12755</id>
        <label>SKI</label>
    </interactant>
    <organismsDiffer>false</organismsDiffer>
    <experiments>4</experiments>
</comment>
<comment type="interaction">
    <interactant intactId="EBI-347233">
        <id>O75376</id>
    </interactant>
    <interactant intactId="EBI-960169">
        <id>P61764</id>
        <label>STXBP1</label>
    </interactant>
    <organismsDiffer>false</organismsDiffer>
    <experiments>3</experiments>
</comment>
<comment type="interaction">
    <interactant intactId="EBI-347233">
        <id>O75376</id>
    </interactant>
    <interactant intactId="EBI-78139">
        <id>Q13263</id>
        <label>TRIM28</label>
    </interactant>
    <organismsDiffer>false</organismsDiffer>
    <experiments>4</experiments>
</comment>
<comment type="subcellular location">
    <subcellularLocation>
        <location evidence="5">Nucleus</location>
    </subcellularLocation>
</comment>
<comment type="alternative products">
    <event type="alternative splicing"/>
    <isoform>
        <id>O75376-1</id>
        <name>1</name>
        <sequence type="displayed"/>
    </isoform>
    <isoform>
        <id>O75376-2</id>
        <name>2</name>
        <sequence type="described" ref="VSP_010207 VSP_010208"/>
    </isoform>
    <isoform>
        <id>O75376-3</id>
        <name>3</name>
        <name>b</name>
        <sequence type="described" ref="VSP_046468 VSP_010207 VSP_046469 VSP_046470"/>
    </isoform>
</comment>
<comment type="domain">
    <text>The N-terminal region contains three independent domains that are capable of mediating transcriptional repression (RD1, RD2 and RD3).</text>
</comment>
<comment type="domain">
    <text evidence="1">The C-terminal region contains two separate nuclear receptor-interacting domains (ID1 and ID2), each of which contains a conserved sequence referred to as the CORNR box. This motif is necessary and sufficient for binding to unligated nuclear hormone receptors, while sequences flanking the CORNR box determine the precise nuclear hormone receptor specificity (By similarity).</text>
</comment>
<comment type="PTM">
    <text evidence="1">Ubiquitinated; mediated by SIAH2 and leading to its subsequent proteasomal degradation.</text>
</comment>
<comment type="similarity">
    <text evidence="25">Belongs to the N-CoR nuclear receptor corepressors family.</text>
</comment>
<comment type="sequence caution" evidence="25">
    <conflict type="erroneous initiation">
        <sequence resource="EMBL-CDS" id="BAA82999"/>
    </conflict>
    <text>Extended N-terminus.</text>
</comment>
<evidence type="ECO:0000250" key="1"/>
<evidence type="ECO:0000250" key="2">
    <source>
        <dbReference type="UniProtKB" id="Q60974"/>
    </source>
</evidence>
<evidence type="ECO:0000250" key="3">
    <source>
        <dbReference type="UniProtKB" id="Q9WUB5"/>
    </source>
</evidence>
<evidence type="ECO:0000255" key="4"/>
<evidence type="ECO:0000255" key="5">
    <source>
        <dbReference type="PROSITE-ProRule" id="PRU00624"/>
    </source>
</evidence>
<evidence type="ECO:0000256" key="6">
    <source>
        <dbReference type="SAM" id="MobiDB-lite"/>
    </source>
</evidence>
<evidence type="ECO:0000269" key="7">
    <source>
    </source>
</evidence>
<evidence type="ECO:0000269" key="8">
    <source>
    </source>
</evidence>
<evidence type="ECO:0000269" key="9">
    <source>
    </source>
</evidence>
<evidence type="ECO:0000269" key="10">
    <source>
    </source>
</evidence>
<evidence type="ECO:0000269" key="11">
    <source>
    </source>
</evidence>
<evidence type="ECO:0000269" key="12">
    <source>
    </source>
</evidence>
<evidence type="ECO:0000269" key="13">
    <source>
    </source>
</evidence>
<evidence type="ECO:0000269" key="14">
    <source>
    </source>
</evidence>
<evidence type="ECO:0000269" key="15">
    <source>
    </source>
</evidence>
<evidence type="ECO:0000269" key="16">
    <source>
    </source>
</evidence>
<evidence type="ECO:0000269" key="17">
    <source>
    </source>
</evidence>
<evidence type="ECO:0000269" key="18">
    <source>
    </source>
</evidence>
<evidence type="ECO:0000269" key="19">
    <source>
    </source>
</evidence>
<evidence type="ECO:0000269" key="20">
    <source>
    </source>
</evidence>
<evidence type="ECO:0000269" key="21">
    <source>
    </source>
</evidence>
<evidence type="ECO:0000303" key="22">
    <source>
    </source>
</evidence>
<evidence type="ECO:0000303" key="23">
    <source>
    </source>
</evidence>
<evidence type="ECO:0000303" key="24">
    <source ref="2"/>
</evidence>
<evidence type="ECO:0000305" key="25"/>
<evidence type="ECO:0007744" key="26">
    <source>
    </source>
</evidence>
<evidence type="ECO:0007744" key="27">
    <source>
    </source>
</evidence>
<evidence type="ECO:0007744" key="28">
    <source>
    </source>
</evidence>
<evidence type="ECO:0007744" key="29">
    <source>
    </source>
</evidence>
<evidence type="ECO:0007744" key="30">
    <source>
    </source>
</evidence>
<evidence type="ECO:0007744" key="31">
    <source>
    </source>
</evidence>
<evidence type="ECO:0007744" key="32">
    <source>
    </source>
</evidence>
<evidence type="ECO:0007744" key="33">
    <source>
    </source>
</evidence>
<evidence type="ECO:0007744" key="34">
    <source>
    </source>
</evidence>
<evidence type="ECO:0007744" key="35">
    <source>
    </source>
</evidence>
<evidence type="ECO:0007744" key="36">
    <source>
    </source>
</evidence>
<evidence type="ECO:0007744" key="37">
    <source>
    </source>
</evidence>
<evidence type="ECO:0007744" key="38">
    <source>
    </source>
</evidence>
<evidence type="ECO:0007744" key="39">
    <source>
    </source>
</evidence>
<evidence type="ECO:0007744" key="40">
    <source>
    </source>
</evidence>
<evidence type="ECO:0007829" key="41">
    <source>
        <dbReference type="PDB" id="2EQR"/>
    </source>
</evidence>
<evidence type="ECO:0007829" key="42">
    <source>
        <dbReference type="PDB" id="3KMZ"/>
    </source>
</evidence>
<evidence type="ECO:0007829" key="43">
    <source>
        <dbReference type="PDB" id="6XYX"/>
    </source>
</evidence>
<evidence type="ECO:0007829" key="44">
    <source>
        <dbReference type="PDB" id="6XZZ"/>
    </source>
</evidence>
<evidence type="ECO:0007829" key="45">
    <source>
        <dbReference type="PDB" id="8FKC"/>
    </source>
</evidence>
<dbReference type="EMBL" id="AF044209">
    <property type="protein sequence ID" value="AAC33550.1"/>
    <property type="molecule type" value="mRNA"/>
</dbReference>
<dbReference type="EMBL" id="AF303586">
    <property type="protein sequence ID" value="AAO32942.1"/>
    <property type="molecule type" value="mRNA"/>
</dbReference>
<dbReference type="EMBL" id="AB028970">
    <property type="protein sequence ID" value="BAA82999.2"/>
    <property type="status" value="ALT_INIT"/>
    <property type="molecule type" value="mRNA"/>
</dbReference>
<dbReference type="EMBL" id="AC002553">
    <property type="status" value="NOT_ANNOTATED_CDS"/>
    <property type="molecule type" value="Genomic_DNA"/>
</dbReference>
<dbReference type="EMBL" id="AC005971">
    <property type="status" value="NOT_ANNOTATED_CDS"/>
    <property type="molecule type" value="Genomic_DNA"/>
</dbReference>
<dbReference type="EMBL" id="CH471222">
    <property type="protein sequence ID" value="EAX04494.1"/>
    <property type="molecule type" value="Genomic_DNA"/>
</dbReference>
<dbReference type="EMBL" id="BC167431">
    <property type="protein sequence ID" value="AAI67431.1"/>
    <property type="molecule type" value="mRNA"/>
</dbReference>
<dbReference type="EMBL" id="AB019524">
    <property type="protein sequence ID" value="BAA75814.1"/>
    <property type="molecule type" value="mRNA"/>
</dbReference>
<dbReference type="CCDS" id="CCDS11175.1">
    <molecule id="O75376-1"/>
</dbReference>
<dbReference type="CCDS" id="CCDS54094.1">
    <molecule id="O75376-3"/>
</dbReference>
<dbReference type="CCDS" id="CCDS54095.1">
    <molecule id="O75376-2"/>
</dbReference>
<dbReference type="RefSeq" id="NP_001177367.1">
    <molecule id="O75376-3"/>
    <property type="nucleotide sequence ID" value="NM_001190438.1"/>
</dbReference>
<dbReference type="RefSeq" id="NP_001177369.1">
    <molecule id="O75376-2"/>
    <property type="nucleotide sequence ID" value="NM_001190440.1"/>
</dbReference>
<dbReference type="RefSeq" id="NP_006302.2">
    <molecule id="O75376-1"/>
    <property type="nucleotide sequence ID" value="NM_006311.3"/>
</dbReference>
<dbReference type="RefSeq" id="XP_011522388.1">
    <molecule id="O75376-2"/>
    <property type="nucleotide sequence ID" value="XM_011524086.4"/>
</dbReference>
<dbReference type="RefSeq" id="XP_054173929.1">
    <molecule id="O75376-2"/>
    <property type="nucleotide sequence ID" value="XM_054317954.1"/>
</dbReference>
<dbReference type="PDB" id="2EQR">
    <property type="method" value="NMR"/>
    <property type="chains" value="A=433-486"/>
</dbReference>
<dbReference type="PDB" id="3H52">
    <property type="method" value="X-ray"/>
    <property type="resolution" value="2.80 A"/>
    <property type="chains" value="M/N=2258-2276"/>
</dbReference>
<dbReference type="PDB" id="3KMZ">
    <property type="method" value="X-ray"/>
    <property type="resolution" value="2.10 A"/>
    <property type="chains" value="C/D=2047-2065"/>
</dbReference>
<dbReference type="PDB" id="3N00">
    <property type="method" value="X-ray"/>
    <property type="resolution" value="2.60 A"/>
    <property type="chains" value="B=2045-2065"/>
</dbReference>
<dbReference type="PDB" id="4MDD">
    <property type="method" value="X-ray"/>
    <property type="resolution" value="2.40 A"/>
    <property type="chains" value="C/D=2260-2274"/>
</dbReference>
<dbReference type="PDB" id="4WVD">
    <property type="method" value="X-ray"/>
    <property type="resolution" value="2.90 A"/>
    <property type="chains" value="C/D=2259-2275"/>
</dbReference>
<dbReference type="PDB" id="6ONI">
    <property type="method" value="X-ray"/>
    <property type="resolution" value="1.80 A"/>
    <property type="chains" value="D=2256-2278"/>
</dbReference>
<dbReference type="PDB" id="6WMQ">
    <property type="method" value="X-ray"/>
    <property type="resolution" value="2.55 A"/>
    <property type="chains" value="E/F=2044-2066"/>
</dbReference>
<dbReference type="PDB" id="6WMS">
    <property type="method" value="X-ray"/>
    <property type="resolution" value="2.00 A"/>
    <property type="chains" value="E/F=2256-2278"/>
</dbReference>
<dbReference type="PDB" id="6XXS">
    <property type="method" value="X-ray"/>
    <property type="resolution" value="3.25 A"/>
    <property type="chains" value="C/D/G/H=1340-1356"/>
</dbReference>
<dbReference type="PDB" id="6XYX">
    <property type="method" value="X-ray"/>
    <property type="resolution" value="1.44 A"/>
    <property type="chains" value="C/D=1340-1356"/>
</dbReference>
<dbReference type="PDB" id="6XZZ">
    <property type="method" value="X-ray"/>
    <property type="resolution" value="1.39 A"/>
    <property type="chains" value="B=1726-1742"/>
</dbReference>
<dbReference type="PDB" id="6Y17">
    <property type="method" value="X-ray"/>
    <property type="resolution" value="1.56 A"/>
    <property type="chains" value="A/B=1733-1741, C/D=1340-1356"/>
</dbReference>
<dbReference type="PDB" id="6ZBU">
    <property type="method" value="X-ray"/>
    <property type="resolution" value="2.46 A"/>
    <property type="chains" value="A/B/E/F/I/J=1733-1741, C/D/G/H/K/L=1340-1356"/>
</dbReference>
<dbReference type="PDB" id="8AS9">
    <property type="method" value="X-ray"/>
    <property type="resolution" value="3.40 A"/>
    <property type="chains" value="D=1341-1356"/>
</dbReference>
<dbReference type="PDB" id="8D8I">
    <property type="method" value="X-ray"/>
    <property type="resolution" value="2.50 A"/>
    <property type="chains" value="B=2045-2064"/>
</dbReference>
<dbReference type="PDB" id="8DKN">
    <property type="method" value="X-ray"/>
    <property type="resolution" value="1.95 A"/>
    <property type="chains" value="C=2260-2272"/>
</dbReference>
<dbReference type="PDB" id="8DKV">
    <property type="method" value="X-ray"/>
    <property type="resolution" value="1.59 A"/>
    <property type="chains" value="C=2259-2272"/>
</dbReference>
<dbReference type="PDB" id="8FHE">
    <property type="method" value="X-ray"/>
    <property type="resolution" value="1.80 A"/>
    <property type="chains" value="D=2256-2278"/>
</dbReference>
<dbReference type="PDB" id="8FHG">
    <property type="method" value="X-ray"/>
    <property type="resolution" value="1.80 A"/>
    <property type="chains" value="D=2256-2278"/>
</dbReference>
<dbReference type="PDB" id="8FKC">
    <property type="method" value="X-ray"/>
    <property type="resolution" value="1.42 A"/>
    <property type="chains" value="D=2256-2278"/>
</dbReference>
<dbReference type="PDB" id="8FKD">
    <property type="method" value="X-ray"/>
    <property type="resolution" value="2.22 A"/>
    <property type="chains" value="D=2256-2278"/>
</dbReference>
<dbReference type="PDB" id="8FKE">
    <property type="method" value="X-ray"/>
    <property type="resolution" value="2.02 A"/>
    <property type="chains" value="D=2256-2278"/>
</dbReference>
<dbReference type="PDB" id="8FKF">
    <property type="method" value="X-ray"/>
    <property type="resolution" value="1.82 A"/>
    <property type="chains" value="D=2256-2278"/>
</dbReference>
<dbReference type="PDB" id="8FKG">
    <property type="method" value="X-ray"/>
    <property type="resolution" value="2.12 A"/>
    <property type="chains" value="D=2256-2278"/>
</dbReference>
<dbReference type="PDBsum" id="2EQR"/>
<dbReference type="PDBsum" id="3H52"/>
<dbReference type="PDBsum" id="3KMZ"/>
<dbReference type="PDBsum" id="3N00"/>
<dbReference type="PDBsum" id="4MDD"/>
<dbReference type="PDBsum" id="4WVD"/>
<dbReference type="PDBsum" id="6ONI"/>
<dbReference type="PDBsum" id="6WMQ"/>
<dbReference type="PDBsum" id="6WMS"/>
<dbReference type="PDBsum" id="6XXS"/>
<dbReference type="PDBsum" id="6XYX"/>
<dbReference type="PDBsum" id="6XZZ"/>
<dbReference type="PDBsum" id="6Y17"/>
<dbReference type="PDBsum" id="6ZBU"/>
<dbReference type="PDBsum" id="8AS9"/>
<dbReference type="PDBsum" id="8D8I"/>
<dbReference type="PDBsum" id="8DKN"/>
<dbReference type="PDBsum" id="8DKV"/>
<dbReference type="PDBsum" id="8FHE"/>
<dbReference type="PDBsum" id="8FHG"/>
<dbReference type="PDBsum" id="8FKC"/>
<dbReference type="PDBsum" id="8FKD"/>
<dbReference type="PDBsum" id="8FKE"/>
<dbReference type="PDBsum" id="8FKF"/>
<dbReference type="PDBsum" id="8FKG"/>
<dbReference type="SMR" id="O75376"/>
<dbReference type="BioGRID" id="114973">
    <property type="interactions" value="337"/>
</dbReference>
<dbReference type="CORUM" id="O75376"/>
<dbReference type="DIP" id="DIP-29402N"/>
<dbReference type="ELM" id="O75376"/>
<dbReference type="FunCoup" id="O75376">
    <property type="interactions" value="1796"/>
</dbReference>
<dbReference type="IntAct" id="O75376">
    <property type="interactions" value="176"/>
</dbReference>
<dbReference type="MINT" id="O75376"/>
<dbReference type="STRING" id="9606.ENSP00000268712"/>
<dbReference type="BindingDB" id="O75376"/>
<dbReference type="ChEMBL" id="CHEMBL3038484"/>
<dbReference type="DrugCentral" id="O75376"/>
<dbReference type="CarbonylDB" id="O75376"/>
<dbReference type="GlyConnect" id="2903">
    <property type="glycosylation" value="1 O-GlcNAc glycan (1 site)"/>
</dbReference>
<dbReference type="GlyCosmos" id="O75376">
    <property type="glycosylation" value="35 sites, 2 glycans"/>
</dbReference>
<dbReference type="GlyGen" id="O75376">
    <property type="glycosylation" value="82 sites, 2 N-linked glycans (2 sites), 2 O-linked glycans (79 sites)"/>
</dbReference>
<dbReference type="iPTMnet" id="O75376"/>
<dbReference type="MetOSite" id="O75376"/>
<dbReference type="PhosphoSitePlus" id="O75376"/>
<dbReference type="SwissPalm" id="O75376"/>
<dbReference type="BioMuta" id="NCOR1"/>
<dbReference type="jPOST" id="O75376"/>
<dbReference type="MassIVE" id="O75376"/>
<dbReference type="PaxDb" id="9606-ENSP00000268712"/>
<dbReference type="PeptideAtlas" id="O75376"/>
<dbReference type="ProteomicsDB" id="20402"/>
<dbReference type="ProteomicsDB" id="49948">
    <molecule id="O75376-1"/>
</dbReference>
<dbReference type="ProteomicsDB" id="49949">
    <molecule id="O75376-2"/>
</dbReference>
<dbReference type="Pumba" id="O75376"/>
<dbReference type="Antibodypedia" id="13188">
    <property type="antibodies" value="442 antibodies from 38 providers"/>
</dbReference>
<dbReference type="CPTC" id="O75376">
    <property type="antibodies" value="3 antibodies"/>
</dbReference>
<dbReference type="DNASU" id="9611"/>
<dbReference type="Ensembl" id="ENST00000268712.8">
    <molecule id="O75376-1"/>
    <property type="protein sequence ID" value="ENSP00000268712.2"/>
    <property type="gene ID" value="ENSG00000141027.23"/>
</dbReference>
<dbReference type="Ensembl" id="ENST00000395848.5">
    <molecule id="O75376-3"/>
    <property type="protein sequence ID" value="ENSP00000379189.1"/>
    <property type="gene ID" value="ENSG00000141027.23"/>
</dbReference>
<dbReference type="Ensembl" id="ENST00000395851.5">
    <molecule id="O75376-2"/>
    <property type="protein sequence ID" value="ENSP00000379192.1"/>
    <property type="gene ID" value="ENSG00000141027.23"/>
</dbReference>
<dbReference type="GeneID" id="9611"/>
<dbReference type="KEGG" id="hsa:9611"/>
<dbReference type="MANE-Select" id="ENST00000268712.8">
    <property type="protein sequence ID" value="ENSP00000268712.2"/>
    <property type="RefSeq nucleotide sequence ID" value="NM_006311.4"/>
    <property type="RefSeq protein sequence ID" value="NP_006302.2"/>
</dbReference>
<dbReference type="UCSC" id="uc002gpn.4">
    <molecule id="O75376-1"/>
    <property type="organism name" value="human"/>
</dbReference>
<dbReference type="AGR" id="HGNC:7672"/>
<dbReference type="CTD" id="9611"/>
<dbReference type="DisGeNET" id="9611"/>
<dbReference type="GeneCards" id="NCOR1"/>
<dbReference type="HGNC" id="HGNC:7672">
    <property type="gene designation" value="NCOR1"/>
</dbReference>
<dbReference type="HPA" id="ENSG00000141027">
    <property type="expression patterns" value="Low tissue specificity"/>
</dbReference>
<dbReference type="MalaCards" id="NCOR1"/>
<dbReference type="MIM" id="600849">
    <property type="type" value="gene"/>
</dbReference>
<dbReference type="neXtProt" id="NX_O75376"/>
<dbReference type="OpenTargets" id="ENSG00000141027"/>
<dbReference type="PharmGKB" id="PA31477"/>
<dbReference type="VEuPathDB" id="HostDB:ENSG00000141027"/>
<dbReference type="eggNOG" id="KOG1878">
    <property type="taxonomic scope" value="Eukaryota"/>
</dbReference>
<dbReference type="GeneTree" id="ENSGT00940000155093"/>
<dbReference type="HOGENOM" id="CLU_000922_0_0_1"/>
<dbReference type="InParanoid" id="O75376"/>
<dbReference type="OMA" id="AVIPPMX"/>
<dbReference type="OrthoDB" id="10258692at2759"/>
<dbReference type="PAN-GO" id="O75376">
    <property type="GO annotations" value="3 GO annotations based on evolutionary models"/>
</dbReference>
<dbReference type="PhylomeDB" id="O75376"/>
<dbReference type="TreeFam" id="TF106423"/>
<dbReference type="PathwayCommons" id="O75376"/>
<dbReference type="Reactome" id="R-HSA-1251985">
    <property type="pathway name" value="Nuclear signaling by ERBB4"/>
</dbReference>
<dbReference type="Reactome" id="R-HSA-1368071">
    <property type="pathway name" value="NR1D1 (REV-ERBA) represses gene expression"/>
</dbReference>
<dbReference type="Reactome" id="R-HSA-1989781">
    <property type="pathway name" value="PPARA activates gene expression"/>
</dbReference>
<dbReference type="Reactome" id="R-HSA-2122947">
    <property type="pathway name" value="NOTCH1 Intracellular Domain Regulates Transcription"/>
</dbReference>
<dbReference type="Reactome" id="R-HSA-2151201">
    <property type="pathway name" value="Transcriptional activation of mitochondrial biogenesis"/>
</dbReference>
<dbReference type="Reactome" id="R-HSA-2173795">
    <property type="pathway name" value="Downregulation of SMAD2/3:SMAD4 transcriptional activity"/>
</dbReference>
<dbReference type="Reactome" id="R-HSA-2644606">
    <property type="pathway name" value="Constitutive Signaling by NOTCH1 PEST Domain Mutants"/>
</dbReference>
<dbReference type="Reactome" id="R-HSA-2894862">
    <property type="pathway name" value="Constitutive Signaling by NOTCH1 HD+PEST Domain Mutants"/>
</dbReference>
<dbReference type="Reactome" id="R-HSA-3214815">
    <property type="pathway name" value="HDACs deacetylate histones"/>
</dbReference>
<dbReference type="Reactome" id="R-HSA-350054">
    <property type="pathway name" value="Notch-HLH transcription pathway"/>
</dbReference>
<dbReference type="Reactome" id="R-HSA-381340">
    <property type="pathway name" value="Transcriptional regulation of white adipocyte differentiation"/>
</dbReference>
<dbReference type="Reactome" id="R-HSA-383280">
    <property type="pathway name" value="Nuclear Receptor transcription pathway"/>
</dbReference>
<dbReference type="Reactome" id="R-HSA-400206">
    <property type="pathway name" value="Regulation of lipid metabolism by PPARalpha"/>
</dbReference>
<dbReference type="Reactome" id="R-HSA-400253">
    <property type="pathway name" value="Circadian Clock"/>
</dbReference>
<dbReference type="Reactome" id="R-HSA-5617472">
    <property type="pathway name" value="Activation of anterior HOX genes in hindbrain development during early embryogenesis"/>
</dbReference>
<dbReference type="Reactome" id="R-HSA-9022537">
    <property type="pathway name" value="Loss of MECP2 binding ability to the NCoR/SMRT complex"/>
</dbReference>
<dbReference type="Reactome" id="R-HSA-9022692">
    <property type="pathway name" value="Regulation of MECP2 expression and activity"/>
</dbReference>
<dbReference type="Reactome" id="R-HSA-9029569">
    <property type="pathway name" value="NR1H3 &amp; NR1H2 regulate gene expression linked to cholesterol transport and efflux"/>
</dbReference>
<dbReference type="Reactome" id="R-HSA-9609690">
    <property type="pathway name" value="HCMV Early Events"/>
</dbReference>
<dbReference type="Reactome" id="R-HSA-9623433">
    <property type="pathway name" value="NR1H2 &amp; NR1H3 regulate gene expression to control bile acid homeostasis"/>
</dbReference>
<dbReference type="Reactome" id="R-HSA-9707564">
    <property type="pathway name" value="Cytoprotection by HMOX1"/>
</dbReference>
<dbReference type="Reactome" id="R-HSA-9707616">
    <property type="pathway name" value="Heme signaling"/>
</dbReference>
<dbReference type="Reactome" id="R-HSA-9841922">
    <property type="pathway name" value="MLL4 and MLL3 complexes regulate expression of PPARG target genes in adipogenesis and hepatic steatosis"/>
</dbReference>
<dbReference type="SignaLink" id="O75376"/>
<dbReference type="SIGNOR" id="O75376"/>
<dbReference type="BioGRID-ORCS" id="9611">
    <property type="hits" value="61 hits in 1216 CRISPR screens"/>
</dbReference>
<dbReference type="ChiTaRS" id="NCOR1">
    <property type="organism name" value="human"/>
</dbReference>
<dbReference type="EvolutionaryTrace" id="O75376"/>
<dbReference type="GeneWiki" id="Nuclear_receptor_co-repressor_1"/>
<dbReference type="GenomeRNAi" id="9611"/>
<dbReference type="Pharos" id="O75376">
    <property type="development level" value="Tchem"/>
</dbReference>
<dbReference type="PRO" id="PR:O75376"/>
<dbReference type="Proteomes" id="UP000005640">
    <property type="component" value="Chromosome 17"/>
</dbReference>
<dbReference type="RNAct" id="O75376">
    <property type="molecule type" value="protein"/>
</dbReference>
<dbReference type="Bgee" id="ENSG00000141027">
    <property type="expression patterns" value="Expressed in sural nerve and 197 other cell types or tissues"/>
</dbReference>
<dbReference type="ExpressionAtlas" id="O75376">
    <property type="expression patterns" value="baseline and differential"/>
</dbReference>
<dbReference type="GO" id="GO:0000785">
    <property type="term" value="C:chromatin"/>
    <property type="evidence" value="ECO:0000314"/>
    <property type="project" value="BHF-UCL"/>
</dbReference>
<dbReference type="GO" id="GO:0005829">
    <property type="term" value="C:cytosol"/>
    <property type="evidence" value="ECO:0000314"/>
    <property type="project" value="HPA"/>
</dbReference>
<dbReference type="GO" id="GO:0000118">
    <property type="term" value="C:histone deacetylase complex"/>
    <property type="evidence" value="ECO:0000314"/>
    <property type="project" value="UniProtKB"/>
</dbReference>
<dbReference type="GO" id="GO:0016020">
    <property type="term" value="C:membrane"/>
    <property type="evidence" value="ECO:0007005"/>
    <property type="project" value="UniProtKB"/>
</dbReference>
<dbReference type="GO" id="GO:0072686">
    <property type="term" value="C:mitotic spindle"/>
    <property type="evidence" value="ECO:0000314"/>
    <property type="project" value="UniProtKB"/>
</dbReference>
<dbReference type="GO" id="GO:0005654">
    <property type="term" value="C:nucleoplasm"/>
    <property type="evidence" value="ECO:0000314"/>
    <property type="project" value="HPA"/>
</dbReference>
<dbReference type="GO" id="GO:0005634">
    <property type="term" value="C:nucleus"/>
    <property type="evidence" value="ECO:0000314"/>
    <property type="project" value="MGI"/>
</dbReference>
<dbReference type="GO" id="GO:0017053">
    <property type="term" value="C:transcription repressor complex"/>
    <property type="evidence" value="ECO:0000314"/>
    <property type="project" value="UniProtKB"/>
</dbReference>
<dbReference type="GO" id="GO:0042826">
    <property type="term" value="F:histone deacetylase binding"/>
    <property type="evidence" value="ECO:0000353"/>
    <property type="project" value="BHF-UCL"/>
</dbReference>
<dbReference type="GO" id="GO:0016922">
    <property type="term" value="F:nuclear receptor binding"/>
    <property type="evidence" value="ECO:0000353"/>
    <property type="project" value="UniProtKB"/>
</dbReference>
<dbReference type="GO" id="GO:0046966">
    <property type="term" value="F:nuclear thyroid hormone receptor binding"/>
    <property type="evidence" value="ECO:0000318"/>
    <property type="project" value="GO_Central"/>
</dbReference>
<dbReference type="GO" id="GO:0061629">
    <property type="term" value="F:RNA polymerase II-specific DNA-binding transcription factor binding"/>
    <property type="evidence" value="ECO:0000353"/>
    <property type="project" value="BHF-UCL"/>
</dbReference>
<dbReference type="GO" id="GO:0000976">
    <property type="term" value="F:transcription cis-regulatory region binding"/>
    <property type="evidence" value="ECO:0000250"/>
    <property type="project" value="BHF-UCL"/>
</dbReference>
<dbReference type="GO" id="GO:0003714">
    <property type="term" value="F:transcription corepressor activity"/>
    <property type="evidence" value="ECO:0000314"/>
    <property type="project" value="BHF-UCL"/>
</dbReference>
<dbReference type="GO" id="GO:0006325">
    <property type="term" value="P:chromatin organization"/>
    <property type="evidence" value="ECO:0007669"/>
    <property type="project" value="UniProtKB-KW"/>
</dbReference>
<dbReference type="GO" id="GO:0045475">
    <property type="term" value="P:locomotor rhythm"/>
    <property type="evidence" value="ECO:0000250"/>
    <property type="project" value="UniProtKB"/>
</dbReference>
<dbReference type="GO" id="GO:0060766">
    <property type="term" value="P:negative regulation of androgen receptor signaling pathway"/>
    <property type="evidence" value="ECO:0000315"/>
    <property type="project" value="UniProtKB"/>
</dbReference>
<dbReference type="GO" id="GO:0045892">
    <property type="term" value="P:negative regulation of DNA-templated transcription"/>
    <property type="evidence" value="ECO:0000315"/>
    <property type="project" value="UniProtKB"/>
</dbReference>
<dbReference type="GO" id="GO:0045922">
    <property type="term" value="P:negative regulation of fatty acid metabolic process"/>
    <property type="evidence" value="ECO:0000315"/>
    <property type="project" value="BHF-UCL"/>
</dbReference>
<dbReference type="GO" id="GO:0045820">
    <property type="term" value="P:negative regulation of glycolytic process"/>
    <property type="evidence" value="ECO:0000315"/>
    <property type="project" value="BHF-UCL"/>
</dbReference>
<dbReference type="GO" id="GO:0046329">
    <property type="term" value="P:negative regulation of JNK cascade"/>
    <property type="evidence" value="ECO:0000314"/>
    <property type="project" value="UniProtKB"/>
</dbReference>
<dbReference type="GO" id="GO:1902894">
    <property type="term" value="P:negative regulation of miRNA transcription"/>
    <property type="evidence" value="ECO:0000315"/>
    <property type="project" value="BHF-UCL"/>
</dbReference>
<dbReference type="GO" id="GO:0000122">
    <property type="term" value="P:negative regulation of transcription by RNA polymerase II"/>
    <property type="evidence" value="ECO:0000315"/>
    <property type="project" value="UniProtKB"/>
</dbReference>
<dbReference type="GO" id="GO:0051225">
    <property type="term" value="P:spindle assembly"/>
    <property type="evidence" value="ECO:0000315"/>
    <property type="project" value="UniProtKB"/>
</dbReference>
<dbReference type="CDD" id="cd00167">
    <property type="entry name" value="SANT"/>
    <property type="match status" value="2"/>
</dbReference>
<dbReference type="FunFam" id="1.20.58.1880:FF:000004">
    <property type="entry name" value="nuclear receptor corepressor 1 isoform X4"/>
    <property type="match status" value="1"/>
</dbReference>
<dbReference type="FunFam" id="1.10.10.60:FF:000026">
    <property type="entry name" value="Nuclear receptor corepressor 2 isoform 1"/>
    <property type="match status" value="1"/>
</dbReference>
<dbReference type="FunFam" id="1.20.5.430:FF:000001">
    <property type="entry name" value="Nuclear receptor corepressor 2 isoform 1"/>
    <property type="match status" value="1"/>
</dbReference>
<dbReference type="Gene3D" id="1.20.5.430">
    <property type="match status" value="1"/>
</dbReference>
<dbReference type="Gene3D" id="1.20.58.1880">
    <property type="match status" value="1"/>
</dbReference>
<dbReference type="Gene3D" id="1.10.10.60">
    <property type="entry name" value="Homeodomain-like"/>
    <property type="match status" value="1"/>
</dbReference>
<dbReference type="IDEAL" id="IID00189"/>
<dbReference type="InterPro" id="IPR009057">
    <property type="entry name" value="Homeodomain-like_sf"/>
</dbReference>
<dbReference type="InterPro" id="IPR017930">
    <property type="entry name" value="Myb_dom"/>
</dbReference>
<dbReference type="InterPro" id="IPR051571">
    <property type="entry name" value="N-CoR_corepressor"/>
</dbReference>
<dbReference type="InterPro" id="IPR031557">
    <property type="entry name" value="N-CoR_GPS2_interact"/>
</dbReference>
<dbReference type="InterPro" id="IPR001005">
    <property type="entry name" value="SANT/Myb"/>
</dbReference>
<dbReference type="InterPro" id="IPR017884">
    <property type="entry name" value="SANT_dom"/>
</dbReference>
<dbReference type="PANTHER" id="PTHR13992">
    <property type="entry name" value="NUCLEAR RECEPTOR CO-REPRESSOR RELATED NCOR"/>
    <property type="match status" value="1"/>
</dbReference>
<dbReference type="PANTHER" id="PTHR13992:SF5">
    <property type="entry name" value="NUCLEAR RECEPTOR COREPRESSOR 1"/>
    <property type="match status" value="1"/>
</dbReference>
<dbReference type="Pfam" id="PF15784">
    <property type="entry name" value="GPS2_interact"/>
    <property type="match status" value="1"/>
</dbReference>
<dbReference type="Pfam" id="PF00249">
    <property type="entry name" value="Myb_DNA-binding"/>
    <property type="match status" value="1"/>
</dbReference>
<dbReference type="SMART" id="SM00717">
    <property type="entry name" value="SANT"/>
    <property type="match status" value="2"/>
</dbReference>
<dbReference type="SUPFAM" id="SSF46689">
    <property type="entry name" value="Homeodomain-like"/>
    <property type="match status" value="2"/>
</dbReference>
<dbReference type="PROSITE" id="PS51293">
    <property type="entry name" value="SANT"/>
    <property type="match status" value="2"/>
</dbReference>
<keyword id="KW-0002">3D-structure</keyword>
<keyword id="KW-0007">Acetylation</keyword>
<keyword id="KW-0025">Alternative splicing</keyword>
<keyword id="KW-0090">Biological rhythms</keyword>
<keyword id="KW-0156">Chromatin regulator</keyword>
<keyword id="KW-0175">Coiled coil</keyword>
<keyword id="KW-0238">DNA-binding</keyword>
<keyword id="KW-1017">Isopeptide bond</keyword>
<keyword id="KW-0539">Nucleus</keyword>
<keyword id="KW-0597">Phosphoprotein</keyword>
<keyword id="KW-1267">Proteomics identification</keyword>
<keyword id="KW-1185">Reference proteome</keyword>
<keyword id="KW-0677">Repeat</keyword>
<keyword id="KW-0678">Repressor</keyword>
<keyword id="KW-0804">Transcription</keyword>
<keyword id="KW-0805">Transcription regulation</keyword>
<keyword id="KW-0832">Ubl conjugation</keyword>
<proteinExistence type="evidence at protein level"/>
<reference key="1">
    <citation type="journal article" date="1998" name="Proc. Natl. Acad. Sci. U.S.A.">
        <title>ETO, fusion partner in t(8;21) acute myeloid leukemia, represses transcription by interaction with the human N-CoR/mSin3/HDAC1 complex.</title>
        <authorList>
            <person name="Wang J."/>
            <person name="Hoshino T."/>
            <person name="Redner R.L."/>
            <person name="Kajigaya S."/>
            <person name="Liu J.M."/>
        </authorList>
    </citation>
    <scope>NUCLEOTIDE SEQUENCE [MRNA] (ISOFORM 1)</scope>
    <source>
        <tissue>Fetal brain</tissue>
    </source>
</reference>
<reference key="2">
    <citation type="submission" date="2000-09" db="EMBL/GenBank/DDBJ databases">
        <authorList>
            <person name="Yu L."/>
        </authorList>
    </citation>
    <scope>NUCLEOTIDE SEQUENCE [MRNA] (ISOFORM 3)</scope>
</reference>
<reference key="3">
    <citation type="journal article" date="1999" name="DNA Res.">
        <title>Prediction of the coding sequences of unidentified human genes. XIV. The complete sequences of 100 new cDNA clones from brain which code for large proteins in vitro.</title>
        <authorList>
            <person name="Kikuno R."/>
            <person name="Nagase T."/>
            <person name="Ishikawa K."/>
            <person name="Hirosawa M."/>
            <person name="Miyajima N."/>
            <person name="Tanaka A."/>
            <person name="Kotani H."/>
            <person name="Nomura N."/>
            <person name="Ohara O."/>
        </authorList>
    </citation>
    <scope>NUCLEOTIDE SEQUENCE [LARGE SCALE MRNA] (ISOFORM 2)</scope>
    <source>
        <tissue>Brain</tissue>
    </source>
</reference>
<reference key="4">
    <citation type="submission" date="2003-04" db="EMBL/GenBank/DDBJ databases">
        <authorList>
            <person name="Ohara O."/>
            <person name="Nagase T."/>
            <person name="Kikuno R."/>
        </authorList>
    </citation>
    <scope>SEQUENCE REVISION</scope>
</reference>
<reference key="5">
    <citation type="journal article" date="2006" name="Nature">
        <title>DNA sequence of human chromosome 17 and analysis of rearrangement in the human lineage.</title>
        <authorList>
            <person name="Zody M.C."/>
            <person name="Garber M."/>
            <person name="Adams D.J."/>
            <person name="Sharpe T."/>
            <person name="Harrow J."/>
            <person name="Lupski J.R."/>
            <person name="Nicholson C."/>
            <person name="Searle S.M."/>
            <person name="Wilming L."/>
            <person name="Young S.K."/>
            <person name="Abouelleil A."/>
            <person name="Allen N.R."/>
            <person name="Bi W."/>
            <person name="Bloom T."/>
            <person name="Borowsky M.L."/>
            <person name="Bugalter B.E."/>
            <person name="Butler J."/>
            <person name="Chang J.L."/>
            <person name="Chen C.-K."/>
            <person name="Cook A."/>
            <person name="Corum B."/>
            <person name="Cuomo C.A."/>
            <person name="de Jong P.J."/>
            <person name="DeCaprio D."/>
            <person name="Dewar K."/>
            <person name="FitzGerald M."/>
            <person name="Gilbert J."/>
            <person name="Gibson R."/>
            <person name="Gnerre S."/>
            <person name="Goldstein S."/>
            <person name="Grafham D.V."/>
            <person name="Grocock R."/>
            <person name="Hafez N."/>
            <person name="Hagopian D.S."/>
            <person name="Hart E."/>
            <person name="Norman C.H."/>
            <person name="Humphray S."/>
            <person name="Jaffe D.B."/>
            <person name="Jones M."/>
            <person name="Kamal M."/>
            <person name="Khodiyar V.K."/>
            <person name="LaButti K."/>
            <person name="Laird G."/>
            <person name="Lehoczky J."/>
            <person name="Liu X."/>
            <person name="Lokyitsang T."/>
            <person name="Loveland J."/>
            <person name="Lui A."/>
            <person name="Macdonald P."/>
            <person name="Major J.E."/>
            <person name="Matthews L."/>
            <person name="Mauceli E."/>
            <person name="McCarroll S.A."/>
            <person name="Mihalev A.H."/>
            <person name="Mudge J."/>
            <person name="Nguyen C."/>
            <person name="Nicol R."/>
            <person name="O'Leary S.B."/>
            <person name="Osoegawa K."/>
            <person name="Schwartz D.C."/>
            <person name="Shaw-Smith C."/>
            <person name="Stankiewicz P."/>
            <person name="Steward C."/>
            <person name="Swarbreck D."/>
            <person name="Venkataraman V."/>
            <person name="Whittaker C.A."/>
            <person name="Yang X."/>
            <person name="Zimmer A.R."/>
            <person name="Bradley A."/>
            <person name="Hubbard T."/>
            <person name="Birren B.W."/>
            <person name="Rogers J."/>
            <person name="Lander E.S."/>
            <person name="Nusbaum C."/>
        </authorList>
    </citation>
    <scope>NUCLEOTIDE SEQUENCE [LARGE SCALE GENOMIC DNA]</scope>
</reference>
<reference key="6">
    <citation type="submission" date="2005-07" db="EMBL/GenBank/DDBJ databases">
        <authorList>
            <person name="Mural R.J."/>
            <person name="Istrail S."/>
            <person name="Sutton G.G."/>
            <person name="Florea L."/>
            <person name="Halpern A.L."/>
            <person name="Mobarry C.M."/>
            <person name="Lippert R."/>
            <person name="Walenz B."/>
            <person name="Shatkay H."/>
            <person name="Dew I."/>
            <person name="Miller J.R."/>
            <person name="Flanigan M.J."/>
            <person name="Edwards N.J."/>
            <person name="Bolanos R."/>
            <person name="Fasulo D."/>
            <person name="Halldorsson B.V."/>
            <person name="Hannenhalli S."/>
            <person name="Turner R."/>
            <person name="Yooseph S."/>
            <person name="Lu F."/>
            <person name="Nusskern D.R."/>
            <person name="Shue B.C."/>
            <person name="Zheng X.H."/>
            <person name="Zhong F."/>
            <person name="Delcher A.L."/>
            <person name="Huson D.H."/>
            <person name="Kravitz S.A."/>
            <person name="Mouchard L."/>
            <person name="Reinert K."/>
            <person name="Remington K.A."/>
            <person name="Clark A.G."/>
            <person name="Waterman M.S."/>
            <person name="Eichler E.E."/>
            <person name="Adams M.D."/>
            <person name="Hunkapiller M.W."/>
            <person name="Myers E.W."/>
            <person name="Venter J.C."/>
        </authorList>
    </citation>
    <scope>NUCLEOTIDE SEQUENCE [LARGE SCALE GENOMIC DNA]</scope>
</reference>
<reference key="7">
    <citation type="journal article" date="2004" name="Genome Res.">
        <title>The status, quality, and expansion of the NIH full-length cDNA project: the Mammalian Gene Collection (MGC).</title>
        <authorList>
            <consortium name="The MGC Project Team"/>
        </authorList>
    </citation>
    <scope>NUCLEOTIDE SEQUENCE [LARGE SCALE MRNA] (ISOFORM 2)</scope>
</reference>
<reference key="8">
    <citation type="journal article" date="1999" name="Genomics">
        <title>Localization of the human nuclear receptor co-repressor (hN-CoR) gene between the CMT1A and the SMS critical regions of chromosome 17p11.2.</title>
        <authorList>
            <person name="Nagaya T."/>
            <person name="Chen K.-S."/>
            <person name="Fujieda M."/>
            <person name="Ohmori S."/>
            <person name="Richer J.K."/>
            <person name="Horwitz K.B."/>
            <person name="Lupski J.R."/>
            <person name="Seo H."/>
        </authorList>
    </citation>
    <scope>NUCLEOTIDE SEQUENCE [MRNA] OF 974-2440 (ISOFORM 1)</scope>
</reference>
<reference key="9">
    <citation type="journal article" date="1997" name="Mol. Endocrinol.">
        <title>Transcriptional activation and repression by RORalpha, an orphan nuclear receptor required for cerebellar development.</title>
        <authorList>
            <person name="Harding H.P."/>
            <person name="Atkins G.B."/>
            <person name="Jaffe A.B."/>
            <person name="Seo W.J."/>
            <person name="Lazar M.A."/>
        </authorList>
    </citation>
    <scope>INTERACTION WITH RORA</scope>
</reference>
<reference key="10">
    <citation type="journal article" date="2000" name="J. Biol. Chem.">
        <title>A novel nuclear receptor corepressor complex, N-CoR, contains components of the mammalian SWI/SNF complex and the corepressor KAP-1.</title>
        <authorList>
            <person name="Underhill C."/>
            <person name="Qutob M.S."/>
            <person name="Yee S.P."/>
            <person name="Torchia J."/>
        </authorList>
    </citation>
    <scope>INTERACTION WITH TRIM28</scope>
</reference>
<reference key="11">
    <citation type="journal article" date="2001" name="Mol. Cell. Biol.">
        <title>ETO, a target of t(8;21) in acute leukemia, makes distinct contacts with multiple histone deacetylases and binds mSin3A through its oligomerization domain.</title>
        <authorList>
            <person name="Amann J.M."/>
            <person name="Nip J."/>
            <person name="Strom D.K."/>
            <person name="Lutterbach B."/>
            <person name="Harada H."/>
            <person name="Lenny N."/>
            <person name="Downing J.R."/>
            <person name="Meyers S."/>
            <person name="Hiebert S.W."/>
        </authorList>
    </citation>
    <scope>INTERACTION WITH CBFA2T3</scope>
</reference>
<reference key="12">
    <citation type="journal article" date="2002" name="Mol. Cell">
        <title>The N-CoR-HDAC3 nuclear receptor corepressor complex inhibits the JNK pathway through the integral subunit GPS2.</title>
        <authorList>
            <person name="Zhang J."/>
            <person name="Kalkum M."/>
            <person name="Chait B.T."/>
            <person name="Roeder R.G."/>
        </authorList>
    </citation>
    <scope>COMPONENT OF THE N-COR COMPLEX WITH TBL1X; TBL1R; NCOR2; GPS2 AND HDAC3</scope>
</reference>
<reference key="13">
    <citation type="journal article" date="2003" name="J. Biol. Chem.">
        <title>The histone deacetylase 9 gene encodes multiple protein isoforms.</title>
        <authorList>
            <person name="Petrie K."/>
            <person name="Guidez F."/>
            <person name="Howell L."/>
            <person name="Healy L."/>
            <person name="Waxman S."/>
            <person name="Greaves M."/>
            <person name="Zelent A."/>
        </authorList>
    </citation>
    <scope>INTERACTION WITH HDAC9</scope>
</reference>
<reference key="14">
    <citation type="journal article" date="2003" name="J. Biol. Chem.">
        <title>DACH1 inhibits transforming growth factor-beta signaling through binding Smad4.</title>
        <authorList>
            <person name="Wu K."/>
            <person name="Yang Y."/>
            <person name="Wang C."/>
            <person name="Davoli M.A."/>
            <person name="D'Amico M."/>
            <person name="Li A."/>
            <person name="Cveklova K."/>
            <person name="Kozmik Z."/>
            <person name="Lisanti M.P."/>
            <person name="Russell R.G."/>
            <person name="Cvekl A."/>
            <person name="Pestell R.G."/>
        </authorList>
    </citation>
    <scope>INTERACTION WITH DACH1</scope>
</reference>
<reference key="15">
    <citation type="journal article" date="2003" name="Mol. Cell">
        <title>N-CoR mediates DNA methylation-dependent repression through a methyl CpG binding protein Kaiso.</title>
        <authorList>
            <person name="Yoon H.-G."/>
            <person name="Chan D.W."/>
            <person name="Reynolds A.B."/>
            <person name="Qin J."/>
            <person name="Wong J."/>
        </authorList>
    </citation>
    <scope>FUNCTION</scope>
    <scope>INTERACTION WITH CORO2A; GPS2; HDAC3; TBL1R; TBL1X AND ZBTB33</scope>
</reference>
<reference key="16">
    <citation type="journal article" date="2004" name="Cell">
        <title>MTA3 and the Mi-2/NuRD complex regulate cell fate during B lymphocyte differentiation.</title>
        <authorList>
            <person name="Fujita N."/>
            <person name="Jaye D.L."/>
            <person name="Geigerman C."/>
            <person name="Akyildiz A."/>
            <person name="Mooney M.R."/>
            <person name="Boss J.M."/>
            <person name="Wade P.A."/>
        </authorList>
    </citation>
    <scope>INTERACTION WITH BCL6</scope>
</reference>
<reference key="17">
    <citation type="journal article" date="2005" name="Mol. Cell. Biol.">
        <title>JMJD2A is a novel N-CoR-interacting protein and is involved in repression of the human transcription factor achaete scute-like homologue 2 (ASCL2/Hash2).</title>
        <authorList>
            <person name="Zhang D."/>
            <person name="Yoon H.-G."/>
            <person name="Wong J."/>
        </authorList>
    </citation>
    <scope>INTERACTION WITH KDM3A</scope>
</reference>
<reference key="18">
    <citation type="journal article" date="2006" name="Cell">
        <title>Global, in vivo, and site-specific phosphorylation dynamics in signaling networks.</title>
        <authorList>
            <person name="Olsen J.V."/>
            <person name="Blagoev B."/>
            <person name="Gnad F."/>
            <person name="Macek B."/>
            <person name="Kumar C."/>
            <person name="Mortensen P."/>
            <person name="Mann M."/>
        </authorList>
    </citation>
    <scope>PHOSPHORYLATION [LARGE SCALE ANALYSIS] AT SER-224; SER-999 AND SER-2151</scope>
    <scope>IDENTIFICATION BY MASS SPECTROMETRY [LARGE SCALE ANALYSIS]</scope>
    <source>
        <tissue>Cervix carcinoma</tissue>
    </source>
</reference>
<reference key="19">
    <citation type="journal article" date="2006" name="Nat. Biotechnol.">
        <title>A probability-based approach for high-throughput protein phosphorylation analysis and site localization.</title>
        <authorList>
            <person name="Beausoleil S.A."/>
            <person name="Villen J."/>
            <person name="Gerber S.A."/>
            <person name="Rush J."/>
            <person name="Gygi S.P."/>
        </authorList>
    </citation>
    <scope>PHOSPHORYLATION [LARGE SCALE ANALYSIS] AT SER-2184</scope>
    <scope>IDENTIFICATION BY MASS SPECTROMETRY [LARGE SCALE ANALYSIS]</scope>
    <source>
        <tissue>Cervix carcinoma</tissue>
    </source>
</reference>
<reference key="20">
    <citation type="journal article" date="2007" name="Mol. Cell. Biol.">
        <title>Regulation of P-TEFb elongation complex activity by CDK9 acetylation.</title>
        <authorList>
            <person name="Fu J."/>
            <person name="Yoon H.-G."/>
            <person name="Qin J."/>
            <person name="Wong J."/>
        </authorList>
    </citation>
    <scope>INTERACTION WITH HEXIM1</scope>
</reference>
<reference key="21">
    <citation type="journal article" date="2007" name="Mol. Endocrinol.">
        <title>Novel regulatory role for human Acf1 in transcriptional repression of vitamin D3 receptor-regulated genes.</title>
        <authorList>
            <person name="Ewing A.K."/>
            <person name="Attner M."/>
            <person name="Chakravarti D."/>
        </authorList>
    </citation>
    <scope>INTERACTION WITH BAZ1A</scope>
</reference>
<reference key="22">
    <citation type="journal article" date="2008" name="J. Proteome Res.">
        <title>Combining protein-based IMAC, peptide-based IMAC, and MudPIT for efficient phosphoproteomic analysis.</title>
        <authorList>
            <person name="Cantin G.T."/>
            <person name="Yi W."/>
            <person name="Lu B."/>
            <person name="Park S.K."/>
            <person name="Xu T."/>
            <person name="Lee J.-D."/>
            <person name="Yates J.R. III"/>
        </authorList>
    </citation>
    <scope>PHOSPHORYLATION [LARGE SCALE ANALYSIS] AT SER-1472</scope>
    <scope>IDENTIFICATION BY MASS SPECTROMETRY [LARGE SCALE ANALYSIS]</scope>
    <source>
        <tissue>Cervix carcinoma</tissue>
    </source>
</reference>
<reference key="23">
    <citation type="journal article" date="2008" name="Mol. Cell">
        <title>Kinase-selective enrichment enables quantitative phosphoproteomics of the kinome across the cell cycle.</title>
        <authorList>
            <person name="Daub H."/>
            <person name="Olsen J.V."/>
            <person name="Bairlein M."/>
            <person name="Gnad F."/>
            <person name="Oppermann F.S."/>
            <person name="Korner R."/>
            <person name="Greff Z."/>
            <person name="Keri G."/>
            <person name="Stemmann O."/>
            <person name="Mann M."/>
        </authorList>
    </citation>
    <scope>PHOSPHORYLATION [LARGE SCALE ANALYSIS] AT SER-1472</scope>
    <scope>IDENTIFICATION BY MASS SPECTROMETRY [LARGE SCALE ANALYSIS]</scope>
    <source>
        <tissue>Cervix carcinoma</tissue>
    </source>
</reference>
<reference key="24">
    <citation type="journal article" date="2008" name="Proc. Natl. Acad. Sci. U.S.A.">
        <title>A quantitative atlas of mitotic phosphorylation.</title>
        <authorList>
            <person name="Dephoure N."/>
            <person name="Zhou C."/>
            <person name="Villen J."/>
            <person name="Beausoleil S.A."/>
            <person name="Bakalarski C.E."/>
            <person name="Elledge S.J."/>
            <person name="Gygi S.P."/>
        </authorList>
    </citation>
    <scope>PHOSPHORYLATION [LARGE SCALE ANALYSIS] AT SER-1111; SER-1472; SER-1977; SER-1981; SER-2184; THR-2399; SER-2436 AND SER-2438</scope>
    <scope>IDENTIFICATION BY MASS SPECTROMETRY [LARGE SCALE ANALYSIS]</scope>
    <source>
        <tissue>Cervix carcinoma</tissue>
    </source>
</reference>
<reference key="25">
    <citation type="journal article" date="2009" name="Anal. Chem.">
        <title>Lys-N and trypsin cover complementary parts of the phosphoproteome in a refined SCX-based approach.</title>
        <authorList>
            <person name="Gauci S."/>
            <person name="Helbig A.O."/>
            <person name="Slijper M."/>
            <person name="Krijgsveld J."/>
            <person name="Heck A.J."/>
            <person name="Mohammed S."/>
        </authorList>
    </citation>
    <scope>IDENTIFICATION BY MASS SPECTROMETRY [LARGE SCALE ANALYSIS]</scope>
</reference>
<reference key="26">
    <citation type="journal article" date="2009" name="Sci. Signal.">
        <title>Quantitative phosphoproteomic analysis of T cell receptor signaling reveals system-wide modulation of protein-protein interactions.</title>
        <authorList>
            <person name="Mayya V."/>
            <person name="Lundgren D.H."/>
            <person name="Hwang S.-I."/>
            <person name="Rezaul K."/>
            <person name="Wu L."/>
            <person name="Eng J.K."/>
            <person name="Rodionov V."/>
            <person name="Han D.K."/>
        </authorList>
    </citation>
    <scope>PHOSPHORYLATION [LARGE SCALE ANALYSIS] AT SER-1472; SER-1977; SER-2151; SER-2184 AND SER-2436</scope>
    <scope>IDENTIFICATION BY MASS SPECTROMETRY [LARGE SCALE ANALYSIS]</scope>
    <source>
        <tissue>Leukemic T-cell</tissue>
    </source>
</reference>
<reference key="27">
    <citation type="journal article" date="2009" name="Science">
        <title>Lysine acetylation targets protein complexes and co-regulates major cellular functions.</title>
        <authorList>
            <person name="Choudhary C."/>
            <person name="Kumar C."/>
            <person name="Gnad F."/>
            <person name="Nielsen M.L."/>
            <person name="Rehman M."/>
            <person name="Walther T.C."/>
            <person name="Olsen J.V."/>
            <person name="Mann M."/>
        </authorList>
    </citation>
    <scope>ACETYLATION [LARGE SCALE ANALYSIS] AT LYS-1412</scope>
    <scope>IDENTIFICATION BY MASS SPECTROMETRY [LARGE SCALE ANALYSIS]</scope>
</reference>
<reference key="28">
    <citation type="journal article" date="2010" name="Sci. Signal.">
        <title>Quantitative phosphoproteomics reveals widespread full phosphorylation site occupancy during mitosis.</title>
        <authorList>
            <person name="Olsen J.V."/>
            <person name="Vermeulen M."/>
            <person name="Santamaria A."/>
            <person name="Kumar C."/>
            <person name="Miller M.L."/>
            <person name="Jensen L.J."/>
            <person name="Gnad F."/>
            <person name="Cox J."/>
            <person name="Jensen T.S."/>
            <person name="Nigg E.A."/>
            <person name="Brunak S."/>
            <person name="Mann M."/>
        </authorList>
    </citation>
    <scope>PHOSPHORYLATION [LARGE SCALE ANALYSIS] AT SER-1472; SER-2184 AND SER-2438</scope>
    <scope>IDENTIFICATION BY MASS SPECTROMETRY [LARGE SCALE ANALYSIS]</scope>
    <source>
        <tissue>Cervix carcinoma</tissue>
    </source>
</reference>
<reference key="29">
    <citation type="journal article" date="2011" name="BMC Syst. Biol.">
        <title>Initial characterization of the human central proteome.</title>
        <authorList>
            <person name="Burkard T.R."/>
            <person name="Planyavsky M."/>
            <person name="Kaupe I."/>
            <person name="Breitwieser F.P."/>
            <person name="Buerckstuemmer T."/>
            <person name="Bennett K.L."/>
            <person name="Superti-Furga G."/>
            <person name="Colinge J."/>
        </authorList>
    </citation>
    <scope>IDENTIFICATION BY MASS SPECTROMETRY [LARGE SCALE ANALYSIS]</scope>
</reference>
<reference key="30">
    <citation type="journal article" date="2011" name="Cell. Mol. Life Sci.">
        <title>FBI-1 functions as a novel AR co-repressor in prostate cancer cells.</title>
        <authorList>
            <person name="Cui J."/>
            <person name="Yang Y."/>
            <person name="Zhang C."/>
            <person name="Hu P."/>
            <person name="Kan W."/>
            <person name="Bai X."/>
            <person name="Liu X."/>
            <person name="Song H."/>
        </authorList>
    </citation>
    <scope>FUNCTION</scope>
    <scope>INTERACTION WITH AR AND ZBTB7A</scope>
</reference>
<reference key="31">
    <citation type="journal article" date="2011" name="Sci. Signal.">
        <title>System-wide temporal characterization of the proteome and phosphoproteome of human embryonic stem cell differentiation.</title>
        <authorList>
            <person name="Rigbolt K.T."/>
            <person name="Prokhorova T.A."/>
            <person name="Akimov V."/>
            <person name="Henningsen J."/>
            <person name="Johansen P.T."/>
            <person name="Kratchmarova I."/>
            <person name="Kassem M."/>
            <person name="Mann M."/>
            <person name="Olsen J.V."/>
            <person name="Blagoev B."/>
        </authorList>
    </citation>
    <scope>PHOSPHORYLATION [LARGE SCALE ANALYSIS] AT SER-1195; SER-1472; SER-2151; SER-2436 AND SER-2438</scope>
    <scope>IDENTIFICATION BY MASS SPECTROMETRY [LARGE SCALE ANALYSIS]</scope>
</reference>
<reference key="32">
    <citation type="journal article" date="2013" name="Cell Rep.">
        <title>A hybrid mechanism of action for BCL6 in B cells defined by formation of functionally distinct complexes at enhancers and promoters.</title>
        <authorList>
            <person name="Hatzi K."/>
            <person name="Jiang Y."/>
            <person name="Huang C."/>
            <person name="Garrett-Bakelman F."/>
            <person name="Gearhart M.D."/>
            <person name="Giannopoulou E.G."/>
            <person name="Zumbo P."/>
            <person name="Kirouac K."/>
            <person name="Bhaskara S."/>
            <person name="Polo J.M."/>
            <person name="Kormaksson M."/>
            <person name="Mackerell A.D. Jr."/>
            <person name="Xue F."/>
            <person name="Mason C.E."/>
            <person name="Hiebert S.W."/>
            <person name="Prive G.G."/>
            <person name="Cerchietti L."/>
            <person name="Bardwell V.J."/>
            <person name="Elemento O."/>
            <person name="Melnick A."/>
        </authorList>
    </citation>
    <scope>INTERACTION WITH BCL6</scope>
</reference>
<reference key="33">
    <citation type="journal article" date="2013" name="J. Proteome Res.">
        <title>Toward a comprehensive characterization of a human cancer cell phosphoproteome.</title>
        <authorList>
            <person name="Zhou H."/>
            <person name="Di Palma S."/>
            <person name="Preisinger C."/>
            <person name="Peng M."/>
            <person name="Polat A.N."/>
            <person name="Heck A.J."/>
            <person name="Mohammed S."/>
        </authorList>
    </citation>
    <scope>PHOSPHORYLATION [LARGE SCALE ANALYSIS] AT SER-172; SER-224; SER-1111; SER-1196; SER-1249; SER-1263; SER-1281; SER-1322; SER-1450; SER-1472; SER-1592; SER-1977; SER-2120; SER-2151 AND SER-2184</scope>
    <scope>IDENTIFICATION BY MASS SPECTROMETRY [LARGE SCALE ANALYSIS]</scope>
    <source>
        <tissue>Cervix carcinoma</tissue>
        <tissue>Erythroleukemia</tissue>
    </source>
</reference>
<reference key="34">
    <citation type="journal article" date="2013" name="PLoS ONE">
        <title>Structural and functional analysis of the DEAF-1 and BS69 MYND domains.</title>
        <authorList>
            <person name="Kateb F."/>
            <person name="Perrin H."/>
            <person name="Tripsianes K."/>
            <person name="Zou P."/>
            <person name="Spadaccini R."/>
            <person name="Bottomley M."/>
            <person name="Franzmann T.M."/>
            <person name="Buchner J."/>
            <person name="Ansieau S."/>
            <person name="Sattler M."/>
        </authorList>
    </citation>
    <scope>INTERACTION WITH DEAF1</scope>
</reference>
<reference key="35">
    <citation type="journal article" date="2014" name="J. Proteomics">
        <title>An enzyme assisted RP-RPLC approach for in-depth analysis of human liver phosphoproteome.</title>
        <authorList>
            <person name="Bian Y."/>
            <person name="Song C."/>
            <person name="Cheng K."/>
            <person name="Dong M."/>
            <person name="Wang F."/>
            <person name="Huang J."/>
            <person name="Sun D."/>
            <person name="Wang L."/>
            <person name="Ye M."/>
            <person name="Zou H."/>
        </authorList>
    </citation>
    <scope>PHOSPHORYLATION [LARGE SCALE ANALYSIS] AT SER-224; SER-1472; SER-2136 AND SER-2151</scope>
    <scope>IDENTIFICATION BY MASS SPECTROMETRY [LARGE SCALE ANALYSIS]</scope>
    <source>
        <tissue>Liver</tissue>
    </source>
</reference>
<reference key="36">
    <citation type="journal article" date="2014" name="Nat. Struct. Mol. Biol.">
        <title>Uncovering global SUMOylation signaling networks in a site-specific manner.</title>
        <authorList>
            <person name="Hendriks I.A."/>
            <person name="D'Souza R.C."/>
            <person name="Yang B."/>
            <person name="Verlaan-de Vries M."/>
            <person name="Mann M."/>
            <person name="Vertegaal A.C."/>
        </authorList>
    </citation>
    <scope>SUMOYLATION [LARGE SCALE ANALYSIS] AT LYS-1106</scope>
    <scope>IDENTIFICATION BY MASS SPECTROMETRY [LARGE SCALE ANALYSIS]</scope>
</reference>
<reference key="37">
    <citation type="journal article" date="2014" name="Proc. Natl. Acad. Sci. U.S.A.">
        <title>Mapping of SUMO sites and analysis of SUMOylation changes induced by external stimuli.</title>
        <authorList>
            <person name="Impens F."/>
            <person name="Radoshevich L."/>
            <person name="Cossart P."/>
            <person name="Ribet D."/>
        </authorList>
    </citation>
    <scope>SUMOYLATION [LARGE SCALE ANALYSIS] AT LYS-1106</scope>
    <scope>IDENTIFICATION BY MASS SPECTROMETRY [LARGE SCALE ANALYSIS]</scope>
</reference>
<reference key="38">
    <citation type="journal article" date="2015" name="Cell Rep.">
        <title>SUMO-2 orchestrates chromatin modifiers in response to DNA damage.</title>
        <authorList>
            <person name="Hendriks I.A."/>
            <person name="Treffers L.W."/>
            <person name="Verlaan-de Vries M."/>
            <person name="Olsen J.V."/>
            <person name="Vertegaal A.C."/>
        </authorList>
    </citation>
    <scope>SUMOYLATION [LARGE SCALE ANALYSIS] AT LYS-1106</scope>
    <scope>IDENTIFICATION BY MASS SPECTROMETRY [LARGE SCALE ANALYSIS]</scope>
</reference>
<reference key="39">
    <citation type="journal article" date="2017" name="Nat. Struct. Mol. Biol.">
        <title>Site-specific mapping of the human SUMO proteome reveals co-modification with phosphorylation.</title>
        <authorList>
            <person name="Hendriks I.A."/>
            <person name="Lyon D."/>
            <person name="Young C."/>
            <person name="Jensen L.J."/>
            <person name="Vertegaal A.C."/>
            <person name="Nielsen M.L."/>
        </authorList>
    </citation>
    <scope>SUMOYLATION [LARGE SCALE ANALYSIS] AT LYS-1106; LYS-1184; LYS-1389; LYS-1412 AND LYS-1518</scope>
    <scope>IDENTIFICATION BY MASS SPECTROMETRY [LARGE SCALE ANALYSIS]</scope>
</reference>
<reference key="40">
    <citation type="journal article" date="2017" name="Sci. Rep.">
        <title>Functional analyses of a novel missense and other mutations of the vitamin D receptor in association with alopecia.</title>
        <authorList>
            <person name="Tamura M."/>
            <person name="Ishizawa M."/>
            <person name="Isojima T."/>
            <person name="Oezen S."/>
            <person name="Oka A."/>
            <person name="Makishima M."/>
            <person name="Kitanaka S."/>
        </authorList>
    </citation>
    <scope>INTERACTION WITH VDR</scope>
</reference>
<reference key="41">
    <citation type="submission" date="2008-04" db="PDB data bank">
        <title>Solution structure of the first SANT domain from human nuclear receptor corepressor 1.</title>
        <authorList>
            <consortium name="RIKEN structural genomics initiative (RSGI)"/>
        </authorList>
    </citation>
    <scope>STRUCTURE BY NMR OF 433-486</scope>
</reference>
<reference key="42">
    <citation type="journal article" date="2010" name="Nat. Struct. Mol. Biol.">
        <title>A unique secondary-structure switch controls constitutive gene repression by retinoic acid receptor.</title>
        <authorList>
            <person name="le Maire A."/>
            <person name="Teyssier C."/>
            <person name="Erb C."/>
            <person name="Grimaldi M."/>
            <person name="Alvarez S."/>
            <person name="de Lera A.R."/>
            <person name="Balaguer P."/>
            <person name="Gronemeyer H."/>
            <person name="Royer C.A."/>
            <person name="Germain P."/>
            <person name="Bourguet W."/>
        </authorList>
    </citation>
    <scope>X-RAY CRYSTALLOGRAPHY (2.1 ANGSTROMS) OF 2047-2065 IN COMPLEX WITH RARA AND RARA AGONIST BMS493</scope>
    <scope>INTERACTION WITH RARA</scope>
</reference>
<protein>
    <recommendedName>
        <fullName>Nuclear receptor corepressor 1</fullName>
        <shortName>N-CoR</shortName>
        <shortName>N-CoR1</shortName>
    </recommendedName>
</protein>
<name>NCOR1_HUMAN</name>
<organism>
    <name type="scientific">Homo sapiens</name>
    <name type="common">Human</name>
    <dbReference type="NCBI Taxonomy" id="9606"/>
    <lineage>
        <taxon>Eukaryota</taxon>
        <taxon>Metazoa</taxon>
        <taxon>Chordata</taxon>
        <taxon>Craniata</taxon>
        <taxon>Vertebrata</taxon>
        <taxon>Euteleostomi</taxon>
        <taxon>Mammalia</taxon>
        <taxon>Eutheria</taxon>
        <taxon>Euarchontoglires</taxon>
        <taxon>Primates</taxon>
        <taxon>Haplorrhini</taxon>
        <taxon>Catarrhini</taxon>
        <taxon>Hominidae</taxon>
        <taxon>Homo</taxon>
    </lineage>
</organism>
<sequence length="2440" mass="270210">MSSSGYPPNQGAFSTEQSRYPPHSVQYTFPNTRHQQEFAVPDYRSSHLEVSQASQLLQQQQQQQLRRRPSLLSEFHPGSDRPQERRTSYEPFHPGPSPVDHDSLESKRPRLEQVSDSHFQRVSAAVLPLVHPLPEGLRASADAKKDPAFGGKHEAPSSPISGQPCGDDQNASPSKLSKEELIQSMDRVDREIAKVEQQILKLKKKQQQLEEEAAKPPEPEKPVSPPPVEQKHRSIVQIIYDENRKKAEEAHKIFEGLGPKVELPLYNQPSDTKVYHENIKTNQVMRKKLILFFKRRNHARKQREQKICQRYDQLMEAWEKKVDRIENNPRRKAKESKTREYYEKQFPEIRKQREQQERFQRVGQRGAGLSATIARSEHEISEIIDGLSEQENNEKQMRQLSVIPPMMFDAEQRRVKFINMNGLMEDPMKVYKDRQFMNVWTDHEKEIFKDKFIQHPKNFGLIASYLERKSVPDCVLYYYLTKKNENYKALVRRNYGKRRGRNQQIARPSQEEKVEEKEEDKAEKTEKKEEEKKDEEEKDEKEDSKENTKEKDKIDGTAEETEEREQATPRGRKTANSQGRRKGRITRSMTNEAAAASAAAAAATEEPPPPLPPPPEPISTEPVETSRWTEEEMEVAKKGLVEHGRNWAAIAKMVGTKSEAQCKNFYFNYKRRHNLDNLLQQHKQKTSRKPREERDVSQCESVASTVSAQEDEDIEASNEEENPEDSEVEAVKPSEDSPENATSRGNTEPAVELEPTTETAPSTSPSLAVPSTKPAEDESVETQVNDSISAETAEQMDVDQQEHSAEEGSVCDPPPATKADSVDVEVRVPENHASKVEGDNTKERDLDRASEKVEPRDEDLVVAQQINAQRPEPQSDNDSSATCSADEDVDGEPERQRMFPMDSKPSLLNPTGSILVSSPLKPNPLDLPQLQHRAAVIPPMVSCTPCNIPIGTPVSGYALYQRHIKAMHESALLEEQRQRQEQIDLECRSSTSPCGTSKSPNREWEVLQPAPHQVITNLPEGVRLPTTRPTRPPPPLIPSSKTTVASEKPSFIMGGSISQGTPGTYLTSHNQASYTQETPKPSVGSISLGLPRQQESAKSATLPYIKQEEFSPRSQNSQPEGLLVRAQHEGVVRGTAGAIQEGSITRGTPTSKISVESIPSLRGSITQGTPALPQTGIPTEALVKGSISRMPIEDSSPEKGREEAASKGHVIYEGKSGHILSYDNIKNAREGTRSPRTAHEISLKRSYESVEGNIKQGMSMRESPVSAPLEGLICRALPRGSPHSDLKERTVLSGSIMQGTPRATTESFEDGLKYPKQIKRESPPIRAFEGAITKGKPYDGITTIKEMGRSIHEIPRQDILTQESRKTPEVVQSTRPIIEGSISQGTPIKFDNNSGQSAIKHNVKSLITGPSKLSRGMPPLEIVPENIKVVERGKYEDVKAGETVRSRHTSVVSSGPSVLRSTLHEAPKAQLSPGIYDDTSARRTPVSYQNTMSRGSPMMNRTSDVTISSNKSTNHERKSTLTPTQRESIPAKSPVPGVDPVVSHSPFDPHHRGSTAGEVYRSHLPTHLDPAMPFHRALDPAAAAYLFQRQLSPTPGYPSQYQLYAMENTRQTILNDYITSQQMQVNLRPDVARGLSPREQPLGLPYPATRGIIDLTNMPPTILVPHPGGTSTPPMDRITYIPGTQITFPPRPYNSASMSPGHPTHLAAAASAEREREREREKERERERIAAASSDLYLRPGSEQPGRPGSHGYVRSPSPSVRTQETMLQQRPSVFQGTNGTSVITPLDPTAQLRIMPLPAGGPSISQGLPASRYNTAADALAALVDAAASAPQMDVSKTKESKHEAARLEENLRSRSAAVSEQQQLEQKTLEVEKRSVQCLYTSSAFPSGKPQPHSSVVYSEAGKDKGPPPKSRYEEELRTRGKTTITAANFIDVIITRQIASDKDARERGSQSSDSSSSLSSHRYETPSDAIEVISPASSPAPPQEKLQTYQPEVVKANQAENDPTRQYEGPLHHYRPQQESPSPQQQLPPSSQAEGMGQVPRTHRLITLADHICQIITQDFARNQVSSQTPQQPPTSTFQNSPSALVSTPVRTKTSNRYSPESQAQSVHHQRPGSRVSPENLVDKSRGSRPGKSPERSHVSSEPYEPISPPQVPVVHEKQDSLLLLSQRGAEPAEQRNDARSPGSISYLPSFFTKLENTSPMVKSKKQEIFRKLNSSGGGDSDMAAAQPGTEIFNLPAVTTSGSVSSRGHSFADPASNLGLEDIIRKALMGSFDDKVEDHGVVMSQPMGVVPGTANTSVVTSGETRREEGDPSPHSGGVCKPKLISKSNSRKSKSPIPGQGYLGTERPSSVSSVHSEGDYHRQTPGWAWEDRPSSTGSTQFPYNPLTMRMLSSTPPTPIACAPSAVNQAAPHQQNRIWEREPAPLLSAQYETLSDSDD</sequence>
<gene>
    <name type="primary">NCOR1</name>
    <name type="synonym">KIAA1047</name>
</gene>
<feature type="chain" id="PRO_0000055617" description="Nuclear receptor corepressor 1">
    <location>
        <begin position="1"/>
        <end position="2440"/>
    </location>
</feature>
<feature type="domain" description="SANT 1" evidence="5">
    <location>
        <begin position="435"/>
        <end position="486"/>
    </location>
</feature>
<feature type="domain" description="SANT 2" evidence="5">
    <location>
        <begin position="623"/>
        <end position="674"/>
    </location>
</feature>
<feature type="region of interest" description="Interaction with ZBTB33 and HEXIM1" evidence="11 14">
    <location>
        <begin position="1"/>
        <end position="373"/>
    </location>
</feature>
<feature type="region of interest" description="Disordered" evidence="6">
    <location>
        <begin position="1"/>
        <end position="177"/>
    </location>
</feature>
<feature type="region of interest" description="Disordered" evidence="6">
    <location>
        <begin position="206"/>
        <end position="231"/>
    </location>
</feature>
<feature type="region of interest" description="Interaction with SIN3A/B">
    <location>
        <begin position="254"/>
        <end position="312"/>
    </location>
</feature>
<feature type="region of interest" description="Disordered" evidence="6">
    <location>
        <begin position="497"/>
        <end position="632"/>
    </location>
</feature>
<feature type="region of interest" description="Disordered" evidence="6">
    <location>
        <begin position="677"/>
        <end position="915"/>
    </location>
</feature>
<feature type="region of interest" description="Interaction with ETO">
    <location>
        <begin position="988"/>
        <end position="1816"/>
    </location>
</feature>
<feature type="region of interest" description="Disordered" evidence="6">
    <location>
        <begin position="1022"/>
        <end position="1046"/>
    </location>
</feature>
<feature type="region of interest" description="Disordered" evidence="6">
    <location>
        <begin position="1184"/>
        <end position="1204"/>
    </location>
</feature>
<feature type="region of interest" description="Disordered" evidence="6">
    <location>
        <begin position="1440"/>
        <end position="1459"/>
    </location>
</feature>
<feature type="region of interest" description="Disordered" evidence="6">
    <location>
        <begin position="1488"/>
        <end position="1554"/>
    </location>
</feature>
<feature type="region of interest" description="Interaction with C1D" evidence="1">
    <location>
        <begin position="1501"/>
        <end position="2440"/>
    </location>
</feature>
<feature type="region of interest" description="Disordered" evidence="6">
    <location>
        <begin position="1690"/>
        <end position="1759"/>
    </location>
</feature>
<feature type="region of interest" description="Disordered" evidence="6">
    <location>
        <begin position="1884"/>
        <end position="1922"/>
    </location>
</feature>
<feature type="region of interest" description="Disordered" evidence="6">
    <location>
        <begin position="1943"/>
        <end position="1969"/>
    </location>
</feature>
<feature type="region of interest" description="Disordered" evidence="6">
    <location>
        <begin position="2006"/>
        <end position="2041"/>
    </location>
</feature>
<feature type="region of interest" description="ID1" evidence="1">
    <location>
        <begin position="2032"/>
        <end position="2115"/>
    </location>
</feature>
<feature type="region of interest" description="Required for interaction with RARA in the absence of its ligand" evidence="1">
    <location>
        <begin position="2047"/>
        <end position="2050"/>
    </location>
</feature>
<feature type="region of interest" description="Disordered" evidence="6">
    <location>
        <begin position="2067"/>
        <end position="2155"/>
    </location>
</feature>
<feature type="region of interest" description="ID2" evidence="1">
    <location>
        <begin position="2212"/>
        <end position="2273"/>
    </location>
</feature>
<feature type="region of interest" description="Disordered" evidence="6">
    <location>
        <begin position="2287"/>
        <end position="2440"/>
    </location>
</feature>
<feature type="coiled-coil region" evidence="4">
    <location>
        <begin position="174"/>
        <end position="216"/>
    </location>
</feature>
<feature type="coiled-coil region" evidence="4">
    <location>
        <begin position="299"/>
        <end position="328"/>
    </location>
</feature>
<feature type="coiled-coil region" evidence="4">
    <location>
        <begin position="501"/>
        <end position="557"/>
    </location>
</feature>
<feature type="short sequence motif" description="CORNR box 1">
    <location>
        <begin position="1933"/>
        <end position="1937"/>
    </location>
</feature>
<feature type="short sequence motif" description="CORNR box 2">
    <location>
        <begin position="2055"/>
        <end position="2059"/>
    </location>
</feature>
<feature type="short sequence motif" description="CORNR box 3">
    <location>
        <begin position="2263"/>
        <end position="2267"/>
    </location>
</feature>
<feature type="compositionally biased region" description="Polar residues" evidence="6">
    <location>
        <begin position="1"/>
        <end position="18"/>
    </location>
</feature>
<feature type="compositionally biased region" description="Low complexity" evidence="6">
    <location>
        <begin position="51"/>
        <end position="64"/>
    </location>
</feature>
<feature type="compositionally biased region" description="Basic and acidic residues" evidence="6">
    <location>
        <begin position="77"/>
        <end position="88"/>
    </location>
</feature>
<feature type="compositionally biased region" description="Basic and acidic residues" evidence="6">
    <location>
        <begin position="99"/>
        <end position="119"/>
    </location>
</feature>
<feature type="compositionally biased region" description="Basic and acidic residues" evidence="6">
    <location>
        <begin position="141"/>
        <end position="155"/>
    </location>
</feature>
<feature type="compositionally biased region" description="Basic and acidic residues" evidence="6">
    <location>
        <begin position="212"/>
        <end position="221"/>
    </location>
</feature>
<feature type="compositionally biased region" description="Basic and acidic residues" evidence="6">
    <location>
        <begin position="509"/>
        <end position="531"/>
    </location>
</feature>
<feature type="compositionally biased region" description="Basic and acidic residues" evidence="6">
    <location>
        <begin position="541"/>
        <end position="556"/>
    </location>
</feature>
<feature type="compositionally biased region" description="Low complexity" evidence="6">
    <location>
        <begin position="592"/>
        <end position="605"/>
    </location>
</feature>
<feature type="compositionally biased region" description="Pro residues" evidence="6">
    <location>
        <begin position="606"/>
        <end position="617"/>
    </location>
</feature>
<feature type="compositionally biased region" description="Polar residues" evidence="6">
    <location>
        <begin position="698"/>
        <end position="708"/>
    </location>
</feature>
<feature type="compositionally biased region" description="Acidic residues" evidence="6">
    <location>
        <begin position="709"/>
        <end position="728"/>
    </location>
</feature>
<feature type="compositionally biased region" description="Low complexity" evidence="6">
    <location>
        <begin position="752"/>
        <end position="768"/>
    </location>
</feature>
<feature type="compositionally biased region" description="Polar residues" evidence="6">
    <location>
        <begin position="781"/>
        <end position="792"/>
    </location>
</feature>
<feature type="compositionally biased region" description="Basic and acidic residues" evidence="6">
    <location>
        <begin position="820"/>
        <end position="859"/>
    </location>
</feature>
<feature type="compositionally biased region" description="Polar residues" evidence="6">
    <location>
        <begin position="864"/>
        <end position="883"/>
    </location>
</feature>
<feature type="compositionally biased region" description="Polar residues" evidence="6">
    <location>
        <begin position="906"/>
        <end position="915"/>
    </location>
</feature>
<feature type="compositionally biased region" description="Polar residues" evidence="6">
    <location>
        <begin position="1488"/>
        <end position="1512"/>
    </location>
</feature>
<feature type="compositionally biased region" description="Basic and acidic residues" evidence="6">
    <location>
        <begin position="1712"/>
        <end position="1729"/>
    </location>
</feature>
<feature type="compositionally biased region" description="Basic and acidic residues" evidence="6">
    <location>
        <begin position="1903"/>
        <end position="1921"/>
    </location>
</feature>
<feature type="compositionally biased region" description="Low complexity" evidence="6">
    <location>
        <begin position="1952"/>
        <end position="1963"/>
    </location>
</feature>
<feature type="compositionally biased region" description="Low complexity" evidence="6">
    <location>
        <begin position="2020"/>
        <end position="2035"/>
    </location>
</feature>
<feature type="compositionally biased region" description="Low complexity" evidence="6">
    <location>
        <begin position="2067"/>
        <end position="2086"/>
    </location>
</feature>
<feature type="compositionally biased region" description="Polar residues" evidence="6">
    <location>
        <begin position="2087"/>
        <end position="2110"/>
    </location>
</feature>
<feature type="compositionally biased region" description="Basic and acidic residues" evidence="6">
    <location>
        <begin position="2124"/>
        <end position="2142"/>
    </location>
</feature>
<feature type="compositionally biased region" description="Polar residues" evidence="6">
    <location>
        <begin position="2296"/>
        <end position="2305"/>
    </location>
</feature>
<feature type="compositionally biased region" description="Polar residues" evidence="6">
    <location>
        <begin position="2407"/>
        <end position="2418"/>
    </location>
</feature>
<feature type="compositionally biased region" description="Polar residues" evidence="6">
    <location>
        <begin position="2431"/>
        <end position="2440"/>
    </location>
</feature>
<feature type="modified residue" description="Phosphoserine" evidence="35">
    <location>
        <position position="172"/>
    </location>
</feature>
<feature type="modified residue" description="Phosphoserine" evidence="27 35 36">
    <location>
        <position position="224"/>
    </location>
</feature>
<feature type="modified residue" description="Phosphoserine" evidence="27">
    <location>
        <position position="999"/>
    </location>
</feature>
<feature type="modified residue" description="Phosphoserine" evidence="29 35">
    <location>
        <position position="1111"/>
    </location>
</feature>
<feature type="modified residue" description="Phosphoserine" evidence="34">
    <location>
        <position position="1195"/>
    </location>
</feature>
<feature type="modified residue" description="Phosphoserine" evidence="35">
    <location>
        <position position="1196"/>
    </location>
</feature>
<feature type="modified residue" description="Phosphoserine" evidence="35">
    <location>
        <position position="1249"/>
    </location>
</feature>
<feature type="modified residue" description="Phosphoserine" evidence="35">
    <location>
        <position position="1263"/>
    </location>
</feature>
<feature type="modified residue" description="Phosphoserine" evidence="35">
    <location>
        <position position="1281"/>
    </location>
</feature>
<feature type="modified residue" description="Phosphoserine" evidence="35">
    <location>
        <position position="1322"/>
    </location>
</feature>
<feature type="modified residue" description="N6-acetyllysine" evidence="2">
    <location>
        <position position="1336"/>
    </location>
</feature>
<feature type="modified residue" description="Phosphothreonine" evidence="2">
    <location>
        <position position="1367"/>
    </location>
</feature>
<feature type="modified residue" description="N6-acetyllysine; alternate" evidence="31">
    <location>
        <position position="1412"/>
    </location>
</feature>
<feature type="modified residue" description="Phosphoserine" evidence="35">
    <location>
        <position position="1450"/>
    </location>
</feature>
<feature type="modified residue" description="Phosphoserine" evidence="28 29 30 32 33 34 35 36">
    <location>
        <position position="1472"/>
    </location>
</feature>
<feature type="modified residue" description="Phosphoserine" evidence="35">
    <location>
        <position position="1592"/>
    </location>
</feature>
<feature type="modified residue" description="Phosphoserine" evidence="29 32 35">
    <location>
        <position position="1977"/>
    </location>
</feature>
<feature type="modified residue" description="Phosphoserine" evidence="29">
    <location>
        <position position="1981"/>
    </location>
</feature>
<feature type="modified residue" description="Phosphoserine" evidence="3">
    <location>
        <position position="2102"/>
    </location>
</feature>
<feature type="modified residue" description="Phosphoserine" evidence="35">
    <location>
        <position position="2120"/>
    </location>
</feature>
<feature type="modified residue" description="Phosphoserine" evidence="36">
    <location>
        <position position="2136"/>
    </location>
</feature>
<feature type="modified residue" description="Phosphoserine" evidence="27 32 34 35 36">
    <location>
        <position position="2151"/>
    </location>
</feature>
<feature type="modified residue" description="Phosphoserine" evidence="26 29 32 33 35">
    <location>
        <position position="2184"/>
    </location>
</feature>
<feature type="modified residue" description="Phosphothreonine" evidence="29">
    <location>
        <position position="2399"/>
    </location>
</feature>
<feature type="modified residue" description="Phosphoserine" evidence="29 32 34">
    <location>
        <position position="2436"/>
    </location>
</feature>
<feature type="modified residue" description="Phosphoserine" evidence="29 33 34">
    <location>
        <position position="2438"/>
    </location>
</feature>
<feature type="cross-link" description="Glycyl lysine isopeptide (Lys-Gly) (interchain with G-Cter in SUMO1); alternate" evidence="37">
    <location>
        <position position="1106"/>
    </location>
</feature>
<feature type="cross-link" description="Glycyl lysine isopeptide (Lys-Gly) (interchain with G-Cter in SUMO2); alternate" evidence="38 39 40">
    <location>
        <position position="1106"/>
    </location>
</feature>
<feature type="cross-link" description="Glycyl lysine isopeptide (Lys-Gly) (interchain with G-Cter in SUMO2)" evidence="40">
    <location>
        <position position="1184"/>
    </location>
</feature>
<feature type="cross-link" description="Glycyl lysine isopeptide (Lys-Gly) (interchain with G-Cter in SUMO2)" evidence="40">
    <location>
        <position position="1389"/>
    </location>
</feature>
<feature type="cross-link" description="Glycyl lysine isopeptide (Lys-Gly) (interchain with G-Cter in SUMO2); alternate" evidence="40">
    <location>
        <position position="1412"/>
    </location>
</feature>
<feature type="cross-link" description="Glycyl lysine isopeptide (Lys-Gly) (interchain with G-Cter in SUMO2)" evidence="40">
    <location>
        <position position="1518"/>
    </location>
</feature>
<feature type="splice variant" id="VSP_046468" description="In isoform 3." evidence="24">
    <location>
        <begin position="37"/>
        <end position="145"/>
    </location>
</feature>
<feature type="splice variant" id="VSP_010207" description="In isoform 2 and isoform 3." evidence="22 23 24">
    <original>E</original>
    <variation>EGAENSSDTESAPSPSP</variation>
    <location>
        <position position="727"/>
    </location>
</feature>
<feature type="splice variant" id="VSP_046469" description="In isoform 3." evidence="24">
    <original>VL</original>
    <variation>GR</variation>
    <location>
        <begin position="1006"/>
        <end position="1007"/>
    </location>
</feature>
<feature type="splice variant" id="VSP_046470" description="In isoform 3." evidence="24">
    <location>
        <begin position="1008"/>
        <end position="2440"/>
    </location>
</feature>
<feature type="splice variant" id="VSP_010208" description="In isoform 2." evidence="22 23">
    <original>SKHEAARLEENLRSRSAAVSEQQQLEQKTLEVEKRSVQCLYTSSAFPSGKPQPHSSVVYSEAGKDKGPPPKSRYEEELRTRGKTTITAANFIDVIITRQIASDKDARERGSQSSDSSSSL</original>
    <variation>I</variation>
    <location>
        <begin position="1842"/>
        <end position="1961"/>
    </location>
</feature>
<feature type="sequence conflict" description="In Ref. 2; AAO32942." evidence="25" ref="2">
    <original>G</original>
    <variation>V</variation>
    <location>
        <position position="5"/>
    </location>
</feature>
<feature type="sequence conflict" description="In Ref. 2; AAO32942." evidence="25" ref="2">
    <original>Y</original>
    <variation>S</variation>
    <location>
        <position position="20"/>
    </location>
</feature>
<feature type="sequence conflict" description="In Ref. 2; AAO32942." evidence="25" ref="2">
    <original>Q</original>
    <variation>K</variation>
    <location>
        <position position="26"/>
    </location>
</feature>
<feature type="sequence conflict" description="In Ref. 2; AAO32942." evidence="25" ref="2">
    <original>N</original>
    <variation>S</variation>
    <location>
        <position position="31"/>
    </location>
</feature>
<feature type="sequence conflict" description="In Ref. 2; AAO32942." evidence="25" ref="2">
    <original>R</original>
    <variation>H</variation>
    <location>
        <position position="33"/>
    </location>
</feature>
<feature type="sequence conflict" description="In Ref. 2; AAO32942." evidence="25" ref="2">
    <original>N</original>
    <variation>S</variation>
    <location>
        <position position="392"/>
    </location>
</feature>
<feature type="sequence conflict" description="In Ref. 1; AAC33550." evidence="25" ref="1">
    <original>V</original>
    <variation>L</variation>
    <location>
        <position position="1014"/>
    </location>
</feature>
<feature type="sequence conflict" description="In Ref. 1; AAC33550." evidence="25" ref="1">
    <original>SS</original>
    <variation>PP</variation>
    <location>
        <begin position="1508"/>
        <end position="1509"/>
    </location>
</feature>
<feature type="sequence conflict" description="In Ref. 1; AAC33550." evidence="25" ref="1">
    <original>R</original>
    <variation>W</variation>
    <location>
        <position position="1561"/>
    </location>
</feature>
<feature type="sequence conflict" description="In Ref. 1; AAC33550." evidence="25" ref="1">
    <original>H</original>
    <variation>Q</variation>
    <location>
        <position position="1567"/>
    </location>
</feature>
<feature type="helix" evidence="41">
    <location>
        <begin position="442"/>
        <end position="454"/>
    </location>
</feature>
<feature type="helix" evidence="41">
    <location>
        <begin position="459"/>
        <end position="465"/>
    </location>
</feature>
<feature type="helix" evidence="41">
    <location>
        <begin position="471"/>
        <end position="481"/>
    </location>
</feature>
<feature type="strand" evidence="43">
    <location>
        <begin position="1343"/>
        <end position="1346"/>
    </location>
</feature>
<feature type="strand" evidence="44">
    <location>
        <begin position="1736"/>
        <end position="1740"/>
    </location>
</feature>
<feature type="strand" evidence="42">
    <location>
        <begin position="2048"/>
        <end position="2050"/>
    </location>
</feature>
<feature type="helix" evidence="42">
    <location>
        <begin position="2051"/>
        <end position="2063"/>
    </location>
</feature>
<feature type="helix" evidence="45">
    <location>
        <begin position="2261"/>
        <end position="2271"/>
    </location>
</feature>
<accession>O75376</accession>
<accession>B3DLF8</accession>
<accession>E9PGV6</accession>
<accession>Q86YY0</accession>
<accession>Q9UPV5</accession>
<accession>Q9UQ18</accession>